<dbReference type="EC" id="5.4.3.8" evidence="1"/>
<dbReference type="EMBL" id="CP000302">
    <property type="protein sequence ID" value="ABE56098.1"/>
    <property type="molecule type" value="Genomic_DNA"/>
</dbReference>
<dbReference type="RefSeq" id="WP_011497248.1">
    <property type="nucleotide sequence ID" value="NC_007954.1"/>
</dbReference>
<dbReference type="SMR" id="Q12KC8"/>
<dbReference type="STRING" id="318161.Sden_2819"/>
<dbReference type="KEGG" id="sdn:Sden_2819"/>
<dbReference type="eggNOG" id="COG0001">
    <property type="taxonomic scope" value="Bacteria"/>
</dbReference>
<dbReference type="HOGENOM" id="CLU_016922_1_5_6"/>
<dbReference type="OrthoDB" id="9801052at2"/>
<dbReference type="UniPathway" id="UPA00251">
    <property type="reaction ID" value="UER00317"/>
</dbReference>
<dbReference type="Proteomes" id="UP000001982">
    <property type="component" value="Chromosome"/>
</dbReference>
<dbReference type="GO" id="GO:0005737">
    <property type="term" value="C:cytoplasm"/>
    <property type="evidence" value="ECO:0007669"/>
    <property type="project" value="UniProtKB-SubCell"/>
</dbReference>
<dbReference type="GO" id="GO:0042286">
    <property type="term" value="F:glutamate-1-semialdehyde 2,1-aminomutase activity"/>
    <property type="evidence" value="ECO:0007669"/>
    <property type="project" value="UniProtKB-UniRule"/>
</dbReference>
<dbReference type="GO" id="GO:0030170">
    <property type="term" value="F:pyridoxal phosphate binding"/>
    <property type="evidence" value="ECO:0007669"/>
    <property type="project" value="InterPro"/>
</dbReference>
<dbReference type="GO" id="GO:0008483">
    <property type="term" value="F:transaminase activity"/>
    <property type="evidence" value="ECO:0007669"/>
    <property type="project" value="InterPro"/>
</dbReference>
<dbReference type="GO" id="GO:0006782">
    <property type="term" value="P:protoporphyrinogen IX biosynthetic process"/>
    <property type="evidence" value="ECO:0007669"/>
    <property type="project" value="UniProtKB-UniRule"/>
</dbReference>
<dbReference type="CDD" id="cd00610">
    <property type="entry name" value="OAT_like"/>
    <property type="match status" value="1"/>
</dbReference>
<dbReference type="FunFam" id="3.40.640.10:FF:000021">
    <property type="entry name" value="Glutamate-1-semialdehyde 2,1-aminomutase"/>
    <property type="match status" value="1"/>
</dbReference>
<dbReference type="Gene3D" id="3.90.1150.10">
    <property type="entry name" value="Aspartate Aminotransferase, domain 1"/>
    <property type="match status" value="1"/>
</dbReference>
<dbReference type="Gene3D" id="3.40.640.10">
    <property type="entry name" value="Type I PLP-dependent aspartate aminotransferase-like (Major domain)"/>
    <property type="match status" value="1"/>
</dbReference>
<dbReference type="HAMAP" id="MF_00375">
    <property type="entry name" value="HemL_aminotrans_3"/>
    <property type="match status" value="1"/>
</dbReference>
<dbReference type="InterPro" id="IPR004639">
    <property type="entry name" value="4pyrrol_synth_GluAld_NH2Trfase"/>
</dbReference>
<dbReference type="InterPro" id="IPR005814">
    <property type="entry name" value="Aminotrans_3"/>
</dbReference>
<dbReference type="InterPro" id="IPR049704">
    <property type="entry name" value="Aminotrans_3_PPA_site"/>
</dbReference>
<dbReference type="InterPro" id="IPR015424">
    <property type="entry name" value="PyrdxlP-dep_Trfase"/>
</dbReference>
<dbReference type="InterPro" id="IPR015421">
    <property type="entry name" value="PyrdxlP-dep_Trfase_major"/>
</dbReference>
<dbReference type="InterPro" id="IPR015422">
    <property type="entry name" value="PyrdxlP-dep_Trfase_small"/>
</dbReference>
<dbReference type="NCBIfam" id="TIGR00713">
    <property type="entry name" value="hemL"/>
    <property type="match status" value="1"/>
</dbReference>
<dbReference type="NCBIfam" id="NF000818">
    <property type="entry name" value="PRK00062.1"/>
    <property type="match status" value="1"/>
</dbReference>
<dbReference type="PANTHER" id="PTHR43713">
    <property type="entry name" value="GLUTAMATE-1-SEMIALDEHYDE 2,1-AMINOMUTASE"/>
    <property type="match status" value="1"/>
</dbReference>
<dbReference type="PANTHER" id="PTHR43713:SF3">
    <property type="entry name" value="GLUTAMATE-1-SEMIALDEHYDE 2,1-AMINOMUTASE 1, CHLOROPLASTIC-RELATED"/>
    <property type="match status" value="1"/>
</dbReference>
<dbReference type="Pfam" id="PF00202">
    <property type="entry name" value="Aminotran_3"/>
    <property type="match status" value="1"/>
</dbReference>
<dbReference type="SUPFAM" id="SSF53383">
    <property type="entry name" value="PLP-dependent transferases"/>
    <property type="match status" value="1"/>
</dbReference>
<dbReference type="PROSITE" id="PS00600">
    <property type="entry name" value="AA_TRANSFER_CLASS_3"/>
    <property type="match status" value="1"/>
</dbReference>
<name>GSA_SHEDO</name>
<evidence type="ECO:0000255" key="1">
    <source>
        <dbReference type="HAMAP-Rule" id="MF_00375"/>
    </source>
</evidence>
<sequence>MNRSEALFEQAKKTIPGGVNSPVRAFNGVGGSPLFIEKADGAYIFDADGNKYIDYVGSWGPMILGHNHPKIRQAVLDAVENGLSFGAPTELEVKMAEKVIAMVPSIEQVRMVSSGTEATMSAIRLARGYTNRDKILKFEGCYHGHADCLLVKAGSGALTLGQPSSPGIPEDFAKHTLTATYNDLASVRSLFELHPDAISCIILEPVAGNMNCIPPIPGFLQGLRGLCDEFGALLIIDEVMTGFRVAMGGAQAHYGVVPDLTTLGKVIGGGMPVGAFGGKKAIMQYIAPTGPVYQAGTLSGNPIAMSAGLAQMEALCEPGLYPALAEKTQRIALGMKAAADKHSIPLSITYVGGMFGFFFTTDSAPMTSFAQVTQCNMEHFRYFYHAMLAQGVYLAPSAYEAGFLSMAHGEDELAMTLKAVDSVFAEMKVAFKL</sequence>
<feature type="chain" id="PRO_0000300945" description="Glutamate-1-semialdehyde 2,1-aminomutase">
    <location>
        <begin position="1"/>
        <end position="433"/>
    </location>
</feature>
<feature type="modified residue" description="N6-(pyridoxal phosphate)lysine" evidence="1">
    <location>
        <position position="265"/>
    </location>
</feature>
<reference key="1">
    <citation type="submission" date="2006-03" db="EMBL/GenBank/DDBJ databases">
        <title>Complete sequence of Shewanella denitrificans OS217.</title>
        <authorList>
            <consortium name="US DOE Joint Genome Institute"/>
            <person name="Copeland A."/>
            <person name="Lucas S."/>
            <person name="Lapidus A."/>
            <person name="Barry K."/>
            <person name="Detter J.C."/>
            <person name="Glavina del Rio T."/>
            <person name="Hammon N."/>
            <person name="Israni S."/>
            <person name="Dalin E."/>
            <person name="Tice H."/>
            <person name="Pitluck S."/>
            <person name="Brettin T."/>
            <person name="Bruce D."/>
            <person name="Han C."/>
            <person name="Tapia R."/>
            <person name="Gilna P."/>
            <person name="Kiss H."/>
            <person name="Schmutz J."/>
            <person name="Larimer F."/>
            <person name="Land M."/>
            <person name="Hauser L."/>
            <person name="Kyrpides N."/>
            <person name="Lykidis A."/>
            <person name="Richardson P."/>
        </authorList>
    </citation>
    <scope>NUCLEOTIDE SEQUENCE [LARGE SCALE GENOMIC DNA]</scope>
    <source>
        <strain>OS217 / ATCC BAA-1090 / DSM 15013</strain>
    </source>
</reference>
<gene>
    <name evidence="1" type="primary">hemL</name>
    <name type="ordered locus">Sden_2819</name>
</gene>
<accession>Q12KC8</accession>
<proteinExistence type="inferred from homology"/>
<keyword id="KW-0963">Cytoplasm</keyword>
<keyword id="KW-0413">Isomerase</keyword>
<keyword id="KW-0627">Porphyrin biosynthesis</keyword>
<keyword id="KW-0663">Pyridoxal phosphate</keyword>
<keyword id="KW-1185">Reference proteome</keyword>
<organism>
    <name type="scientific">Shewanella denitrificans (strain OS217 / ATCC BAA-1090 / DSM 15013)</name>
    <dbReference type="NCBI Taxonomy" id="318161"/>
    <lineage>
        <taxon>Bacteria</taxon>
        <taxon>Pseudomonadati</taxon>
        <taxon>Pseudomonadota</taxon>
        <taxon>Gammaproteobacteria</taxon>
        <taxon>Alteromonadales</taxon>
        <taxon>Shewanellaceae</taxon>
        <taxon>Shewanella</taxon>
    </lineage>
</organism>
<protein>
    <recommendedName>
        <fullName evidence="1">Glutamate-1-semialdehyde 2,1-aminomutase</fullName>
        <shortName evidence="1">GSA</shortName>
        <ecNumber evidence="1">5.4.3.8</ecNumber>
    </recommendedName>
    <alternativeName>
        <fullName evidence="1">Glutamate-1-semialdehyde aminotransferase</fullName>
        <shortName evidence="1">GSA-AT</shortName>
    </alternativeName>
</protein>
<comment type="catalytic activity">
    <reaction evidence="1">
        <text>(S)-4-amino-5-oxopentanoate = 5-aminolevulinate</text>
        <dbReference type="Rhea" id="RHEA:14265"/>
        <dbReference type="ChEBI" id="CHEBI:57501"/>
        <dbReference type="ChEBI" id="CHEBI:356416"/>
        <dbReference type="EC" id="5.4.3.8"/>
    </reaction>
</comment>
<comment type="cofactor">
    <cofactor evidence="1">
        <name>pyridoxal 5'-phosphate</name>
        <dbReference type="ChEBI" id="CHEBI:597326"/>
    </cofactor>
</comment>
<comment type="pathway">
    <text evidence="1">Porphyrin-containing compound metabolism; protoporphyrin-IX biosynthesis; 5-aminolevulinate from L-glutamyl-tRNA(Glu): step 2/2.</text>
</comment>
<comment type="subunit">
    <text evidence="1">Homodimer.</text>
</comment>
<comment type="subcellular location">
    <subcellularLocation>
        <location evidence="1">Cytoplasm</location>
    </subcellularLocation>
</comment>
<comment type="similarity">
    <text evidence="1">Belongs to the class-III pyridoxal-phosphate-dependent aminotransferase family. HemL subfamily.</text>
</comment>